<keyword id="KW-0067">ATP-binding</keyword>
<keyword id="KW-1003">Cell membrane</keyword>
<keyword id="KW-0963">Cytoplasm</keyword>
<keyword id="KW-0472">Membrane</keyword>
<keyword id="KW-0479">Metal-binding</keyword>
<keyword id="KW-0547">Nucleotide-binding</keyword>
<keyword id="KW-0653">Protein transport</keyword>
<keyword id="KW-1185">Reference proteome</keyword>
<keyword id="KW-1278">Translocase</keyword>
<keyword id="KW-0811">Translocation</keyword>
<keyword id="KW-0813">Transport</keyword>
<keyword id="KW-0862">Zinc</keyword>
<sequence>MVDIVDKALRMGEGRQIKKLENVAKATNALEDEIAALDDEELKGQTAKFKQRIENGESLDKLMPEAFATVREASKRTLGLRHFDVQLMGGAALHWGNIAEMKTGEGKTLVATLPAYLNALDGQGVHVVTVNDYLASYQAELMGRVYRFLGMSTGCIITNQKPPERRKQYNADITYGTNNEFGFDYLRDNMAWEKSDLVQRGHHYAIVDEVDSILIDEARTPLIISGPAEGDVTRWYRQFARLVLKLNRDEDYEVDEKKKVVGILDPGITKVEDYLGIDNLYEPNNTALIGYLNNAIKAKELFLRDRDYVVTGGEVLIVDEHTGRILPGRRYNEGLHQAIEAKEGVEVKAENQTFATITLQNYFRMYDKLAGMTGTAETEAAEFMGTYKLGVLPIPTNKPMIREDKDDLIFRTKKEKLAAIVRDVAKRHKKGQPVLLGTASVESSEVVSSLLDVAKIPHQVLNAKQHDKEAAVVAVAGRKGAVTVATNMAGRGTDIMLGGNVEFLADAKLKSEGYSPDDTPDEYEKRWPGTLAEIKDQVKDEHEEVVKLGGLYVLGTERHESRRIDNQLRGRSGRQGDPGESRFYLSLEDDLMRLFNTQLVARVMAKGMPEGEPIEAKSVSKGVRTAQKAVESRNFEIRKNVLKYDDVMNKQRTVIYAERQAVLKGADIHEDILKFIDDTVLSYIKGANNGSDKPADWDWDGLFKAISSVYPIAVEQEGAKDAVDKLKGDKAVEALKELIVSDAKDQYSDFEDKLGSEGLRQLERRVVLAVLDRKWREHLYEMDYLKDGIGLRGMGQRDPLVEYQREGYQMYNSMIEAIKEETIQLLFHVDIERVAMTEDEETESDEDEAVNAAEAVMGLDGEAAATGESAPAEPETDDEAEKTTIDELADEQKNEKGIVGMQPISHAEGKVPANKRPKSEELHSPWADGRTFPGTGKNAQCPCGSGRKYKMCHGQNEQ</sequence>
<protein>
    <recommendedName>
        <fullName evidence="1">Protein translocase subunit SecA</fullName>
        <ecNumber evidence="1">7.4.2.8</ecNumber>
    </recommendedName>
</protein>
<reference key="1">
    <citation type="submission" date="2006-12" db="EMBL/GenBank/DDBJ databases">
        <title>Bifidobacterium adolescentis complete genome sequence.</title>
        <authorList>
            <person name="Suzuki T."/>
            <person name="Tsuda Y."/>
            <person name="Kanou N."/>
            <person name="Inoue T."/>
            <person name="Kumazaki K."/>
            <person name="Nagano S."/>
            <person name="Hirai S."/>
            <person name="Tanaka K."/>
            <person name="Watanabe K."/>
        </authorList>
    </citation>
    <scope>NUCLEOTIDE SEQUENCE [LARGE SCALE GENOMIC DNA]</scope>
    <source>
        <strain>ATCC 15703 / DSM 20083 / NCTC 11814 / E194a</strain>
    </source>
</reference>
<proteinExistence type="inferred from homology"/>
<accession>A1A268</accession>
<name>SECA_BIFAA</name>
<gene>
    <name evidence="1" type="primary">secA</name>
    <name type="ordered locus">BAD_1020</name>
</gene>
<dbReference type="EC" id="7.4.2.8" evidence="1"/>
<dbReference type="EMBL" id="AP009256">
    <property type="protein sequence ID" value="BAF39801.1"/>
    <property type="status" value="ALT_INIT"/>
    <property type="molecule type" value="Genomic_DNA"/>
</dbReference>
<dbReference type="RefSeq" id="WP_011743379.1">
    <property type="nucleotide sequence ID" value="NC_008618.1"/>
</dbReference>
<dbReference type="SMR" id="A1A268"/>
<dbReference type="STRING" id="367928.BAD_1020"/>
<dbReference type="PaxDb" id="1680-BADO_1072"/>
<dbReference type="GeneID" id="4556707"/>
<dbReference type="KEGG" id="bad:BAD_1020"/>
<dbReference type="HOGENOM" id="CLU_005314_3_0_11"/>
<dbReference type="Proteomes" id="UP000008702">
    <property type="component" value="Chromosome"/>
</dbReference>
<dbReference type="GO" id="GO:0031522">
    <property type="term" value="C:cell envelope Sec protein transport complex"/>
    <property type="evidence" value="ECO:0007669"/>
    <property type="project" value="TreeGrafter"/>
</dbReference>
<dbReference type="GO" id="GO:0005829">
    <property type="term" value="C:cytosol"/>
    <property type="evidence" value="ECO:0007669"/>
    <property type="project" value="TreeGrafter"/>
</dbReference>
<dbReference type="GO" id="GO:0005886">
    <property type="term" value="C:plasma membrane"/>
    <property type="evidence" value="ECO:0007669"/>
    <property type="project" value="UniProtKB-SubCell"/>
</dbReference>
<dbReference type="GO" id="GO:0005524">
    <property type="term" value="F:ATP binding"/>
    <property type="evidence" value="ECO:0007669"/>
    <property type="project" value="UniProtKB-UniRule"/>
</dbReference>
<dbReference type="GO" id="GO:0046872">
    <property type="term" value="F:metal ion binding"/>
    <property type="evidence" value="ECO:0007669"/>
    <property type="project" value="UniProtKB-KW"/>
</dbReference>
<dbReference type="GO" id="GO:0008564">
    <property type="term" value="F:protein-exporting ATPase activity"/>
    <property type="evidence" value="ECO:0007669"/>
    <property type="project" value="UniProtKB-EC"/>
</dbReference>
<dbReference type="GO" id="GO:0065002">
    <property type="term" value="P:intracellular protein transmembrane transport"/>
    <property type="evidence" value="ECO:0007669"/>
    <property type="project" value="UniProtKB-UniRule"/>
</dbReference>
<dbReference type="GO" id="GO:0017038">
    <property type="term" value="P:protein import"/>
    <property type="evidence" value="ECO:0007669"/>
    <property type="project" value="InterPro"/>
</dbReference>
<dbReference type="GO" id="GO:0006605">
    <property type="term" value="P:protein targeting"/>
    <property type="evidence" value="ECO:0007669"/>
    <property type="project" value="UniProtKB-UniRule"/>
</dbReference>
<dbReference type="GO" id="GO:0043952">
    <property type="term" value="P:protein transport by the Sec complex"/>
    <property type="evidence" value="ECO:0007669"/>
    <property type="project" value="TreeGrafter"/>
</dbReference>
<dbReference type="CDD" id="cd17928">
    <property type="entry name" value="DEXDc_SecA"/>
    <property type="match status" value="1"/>
</dbReference>
<dbReference type="CDD" id="cd18803">
    <property type="entry name" value="SF2_C_secA"/>
    <property type="match status" value="1"/>
</dbReference>
<dbReference type="FunFam" id="3.40.50.300:FF:000113">
    <property type="entry name" value="Preprotein translocase subunit SecA"/>
    <property type="match status" value="1"/>
</dbReference>
<dbReference type="FunFam" id="3.40.50.300:FF:000334">
    <property type="entry name" value="Protein translocase subunit SecA"/>
    <property type="match status" value="1"/>
</dbReference>
<dbReference type="FunFam" id="3.90.1440.10:FF:000002">
    <property type="entry name" value="Protein translocase subunit SecA"/>
    <property type="match status" value="1"/>
</dbReference>
<dbReference type="Gene3D" id="1.10.3060.10">
    <property type="entry name" value="Helical scaffold and wing domains of SecA"/>
    <property type="match status" value="1"/>
</dbReference>
<dbReference type="Gene3D" id="3.40.50.300">
    <property type="entry name" value="P-loop containing nucleotide triphosphate hydrolases"/>
    <property type="match status" value="2"/>
</dbReference>
<dbReference type="Gene3D" id="3.90.1440.10">
    <property type="entry name" value="SecA, preprotein cross-linking domain"/>
    <property type="match status" value="1"/>
</dbReference>
<dbReference type="HAMAP" id="MF_01382">
    <property type="entry name" value="SecA"/>
    <property type="match status" value="1"/>
</dbReference>
<dbReference type="InterPro" id="IPR014001">
    <property type="entry name" value="Helicase_ATP-bd"/>
</dbReference>
<dbReference type="InterPro" id="IPR001650">
    <property type="entry name" value="Helicase_C-like"/>
</dbReference>
<dbReference type="InterPro" id="IPR027417">
    <property type="entry name" value="P-loop_NTPase"/>
</dbReference>
<dbReference type="InterPro" id="IPR004027">
    <property type="entry name" value="SEC_C_motif"/>
</dbReference>
<dbReference type="InterPro" id="IPR000185">
    <property type="entry name" value="SecA"/>
</dbReference>
<dbReference type="InterPro" id="IPR020937">
    <property type="entry name" value="SecA_CS"/>
</dbReference>
<dbReference type="InterPro" id="IPR011115">
    <property type="entry name" value="SecA_DEAD"/>
</dbReference>
<dbReference type="InterPro" id="IPR014018">
    <property type="entry name" value="SecA_motor_DEAD"/>
</dbReference>
<dbReference type="InterPro" id="IPR011130">
    <property type="entry name" value="SecA_preprotein_X-link_dom"/>
</dbReference>
<dbReference type="InterPro" id="IPR044722">
    <property type="entry name" value="SecA_SF2_C"/>
</dbReference>
<dbReference type="InterPro" id="IPR011116">
    <property type="entry name" value="SecA_Wing/Scaffold"/>
</dbReference>
<dbReference type="InterPro" id="IPR036266">
    <property type="entry name" value="SecA_Wing/Scaffold_sf"/>
</dbReference>
<dbReference type="InterPro" id="IPR036670">
    <property type="entry name" value="SecA_X-link_sf"/>
</dbReference>
<dbReference type="NCBIfam" id="NF009538">
    <property type="entry name" value="PRK12904.1"/>
    <property type="match status" value="1"/>
</dbReference>
<dbReference type="NCBIfam" id="TIGR00963">
    <property type="entry name" value="secA"/>
    <property type="match status" value="1"/>
</dbReference>
<dbReference type="PANTHER" id="PTHR30612:SF0">
    <property type="entry name" value="CHLOROPLAST PROTEIN-TRANSPORTING ATPASE"/>
    <property type="match status" value="1"/>
</dbReference>
<dbReference type="PANTHER" id="PTHR30612">
    <property type="entry name" value="SECA INNER MEMBRANE COMPONENT OF SEC PROTEIN SECRETION SYSTEM"/>
    <property type="match status" value="1"/>
</dbReference>
<dbReference type="Pfam" id="PF21090">
    <property type="entry name" value="P-loop_SecA"/>
    <property type="match status" value="1"/>
</dbReference>
<dbReference type="Pfam" id="PF02810">
    <property type="entry name" value="SEC-C"/>
    <property type="match status" value="1"/>
</dbReference>
<dbReference type="Pfam" id="PF07517">
    <property type="entry name" value="SecA_DEAD"/>
    <property type="match status" value="1"/>
</dbReference>
<dbReference type="Pfam" id="PF01043">
    <property type="entry name" value="SecA_PP_bind"/>
    <property type="match status" value="1"/>
</dbReference>
<dbReference type="Pfam" id="PF07516">
    <property type="entry name" value="SecA_SW"/>
    <property type="match status" value="1"/>
</dbReference>
<dbReference type="PRINTS" id="PR00906">
    <property type="entry name" value="SECA"/>
</dbReference>
<dbReference type="SMART" id="SM00957">
    <property type="entry name" value="SecA_DEAD"/>
    <property type="match status" value="1"/>
</dbReference>
<dbReference type="SMART" id="SM00958">
    <property type="entry name" value="SecA_PP_bind"/>
    <property type="match status" value="1"/>
</dbReference>
<dbReference type="SUPFAM" id="SSF81886">
    <property type="entry name" value="Helical scaffold and wing domains of SecA"/>
    <property type="match status" value="1"/>
</dbReference>
<dbReference type="SUPFAM" id="SSF52540">
    <property type="entry name" value="P-loop containing nucleoside triphosphate hydrolases"/>
    <property type="match status" value="2"/>
</dbReference>
<dbReference type="SUPFAM" id="SSF81767">
    <property type="entry name" value="Pre-protein crosslinking domain of SecA"/>
    <property type="match status" value="1"/>
</dbReference>
<dbReference type="PROSITE" id="PS01312">
    <property type="entry name" value="SECA"/>
    <property type="match status" value="1"/>
</dbReference>
<dbReference type="PROSITE" id="PS51196">
    <property type="entry name" value="SECA_MOTOR_DEAD"/>
    <property type="match status" value="1"/>
</dbReference>
<organism>
    <name type="scientific">Bifidobacterium adolescentis (strain ATCC 15703 / DSM 20083 / NCTC 11814 / E194a)</name>
    <dbReference type="NCBI Taxonomy" id="367928"/>
    <lineage>
        <taxon>Bacteria</taxon>
        <taxon>Bacillati</taxon>
        <taxon>Actinomycetota</taxon>
        <taxon>Actinomycetes</taxon>
        <taxon>Bifidobacteriales</taxon>
        <taxon>Bifidobacteriaceae</taxon>
        <taxon>Bifidobacterium</taxon>
    </lineage>
</organism>
<feature type="chain" id="PRO_0000318325" description="Protein translocase subunit SecA">
    <location>
        <begin position="1"/>
        <end position="958"/>
    </location>
</feature>
<feature type="region of interest" description="Disordered" evidence="2">
    <location>
        <begin position="863"/>
        <end position="883"/>
    </location>
</feature>
<feature type="region of interest" description="Disordered" evidence="2">
    <location>
        <begin position="902"/>
        <end position="937"/>
    </location>
</feature>
<feature type="binding site" evidence="1">
    <location>
        <position position="86"/>
    </location>
    <ligand>
        <name>ATP</name>
        <dbReference type="ChEBI" id="CHEBI:30616"/>
    </ligand>
</feature>
<feature type="binding site" evidence="1">
    <location>
        <begin position="104"/>
        <end position="108"/>
    </location>
    <ligand>
        <name>ATP</name>
        <dbReference type="ChEBI" id="CHEBI:30616"/>
    </ligand>
</feature>
<feature type="binding site" evidence="1">
    <location>
        <position position="494"/>
    </location>
    <ligand>
        <name>ATP</name>
        <dbReference type="ChEBI" id="CHEBI:30616"/>
    </ligand>
</feature>
<feature type="binding site" evidence="1">
    <location>
        <position position="941"/>
    </location>
    <ligand>
        <name>Zn(2+)</name>
        <dbReference type="ChEBI" id="CHEBI:29105"/>
    </ligand>
</feature>
<feature type="binding site" evidence="1">
    <location>
        <position position="943"/>
    </location>
    <ligand>
        <name>Zn(2+)</name>
        <dbReference type="ChEBI" id="CHEBI:29105"/>
    </ligand>
</feature>
<feature type="binding site" evidence="1">
    <location>
        <position position="952"/>
    </location>
    <ligand>
        <name>Zn(2+)</name>
        <dbReference type="ChEBI" id="CHEBI:29105"/>
    </ligand>
</feature>
<feature type="binding site" evidence="1">
    <location>
        <position position="953"/>
    </location>
    <ligand>
        <name>Zn(2+)</name>
        <dbReference type="ChEBI" id="CHEBI:29105"/>
    </ligand>
</feature>
<comment type="function">
    <text evidence="1">Part of the Sec protein translocase complex. Interacts with the SecYEG preprotein conducting channel. Has a central role in coupling the hydrolysis of ATP to the transfer of proteins into and across the cell membrane, serving as an ATP-driven molecular motor driving the stepwise translocation of polypeptide chains across the membrane.</text>
</comment>
<comment type="catalytic activity">
    <reaction evidence="1">
        <text>ATP + H2O + cellular proteinSide 1 = ADP + phosphate + cellular proteinSide 2.</text>
        <dbReference type="EC" id="7.4.2.8"/>
    </reaction>
</comment>
<comment type="cofactor">
    <cofactor evidence="1">
        <name>Zn(2+)</name>
        <dbReference type="ChEBI" id="CHEBI:29105"/>
    </cofactor>
    <text evidence="1">May bind 1 zinc ion per subunit.</text>
</comment>
<comment type="subunit">
    <text evidence="1">Monomer and homodimer. Part of the essential Sec protein translocation apparatus which comprises SecA, SecYEG and auxiliary proteins SecDF. Other proteins may also be involved.</text>
</comment>
<comment type="subcellular location">
    <subcellularLocation>
        <location evidence="1">Cell membrane</location>
        <topology evidence="1">Peripheral membrane protein</topology>
        <orientation evidence="1">Cytoplasmic side</orientation>
    </subcellularLocation>
    <subcellularLocation>
        <location evidence="1">Cytoplasm</location>
    </subcellularLocation>
    <text evidence="1">Distribution is 50-50.</text>
</comment>
<comment type="similarity">
    <text evidence="1">Belongs to the SecA family.</text>
</comment>
<comment type="sequence caution" evidence="3">
    <conflict type="erroneous initiation">
        <sequence resource="EMBL-CDS" id="BAF39801"/>
    </conflict>
    <text>Extended N-terminus.</text>
</comment>
<evidence type="ECO:0000255" key="1">
    <source>
        <dbReference type="HAMAP-Rule" id="MF_01382"/>
    </source>
</evidence>
<evidence type="ECO:0000256" key="2">
    <source>
        <dbReference type="SAM" id="MobiDB-lite"/>
    </source>
</evidence>
<evidence type="ECO:0000305" key="3"/>